<sequence length="294" mass="31384">MTSTESSQPADRYVVVGNPVAHSRSPFIHAAFARQTGEAVEYGRLEAPLDAFADTMRAFLAEGGYGFNVTVPFKLQAYDLADRLTPRAEAAGAVNTMWIEDGLIHGDNTDGIGLVRDIQDNLDTLLEDKRVLLLGAGGAAMGAMLPLIECRPSRIVVANRTASRASDMLEEFVEAADSFGVELWGGGLDALEQLSEDDVCDVVINASSSSLHGEVPPVPAFLLGDGVLAYDMMYGAEPTVFLQHAAQCGARTADGLGMLVEQAAEAFYIWRGVRPRTAPVLADLRAALQAERKG</sequence>
<organism>
    <name type="scientific">Cupriavidus pinatubonensis (strain JMP 134 / LMG 1197)</name>
    <name type="common">Cupriavidus necator (strain JMP 134)</name>
    <dbReference type="NCBI Taxonomy" id="264198"/>
    <lineage>
        <taxon>Bacteria</taxon>
        <taxon>Pseudomonadati</taxon>
        <taxon>Pseudomonadota</taxon>
        <taxon>Betaproteobacteria</taxon>
        <taxon>Burkholderiales</taxon>
        <taxon>Burkholderiaceae</taxon>
        <taxon>Cupriavidus</taxon>
    </lineage>
</organism>
<keyword id="KW-0028">Amino-acid biosynthesis</keyword>
<keyword id="KW-0057">Aromatic amino acid biosynthesis</keyword>
<keyword id="KW-0521">NADP</keyword>
<keyword id="KW-0560">Oxidoreductase</keyword>
<accession>Q46XB7</accession>
<evidence type="ECO:0000255" key="1">
    <source>
        <dbReference type="HAMAP-Rule" id="MF_00222"/>
    </source>
</evidence>
<gene>
    <name evidence="1" type="primary">aroE</name>
    <name type="ordered locus">Reut_A2855</name>
</gene>
<feature type="chain" id="PRO_0000325155" description="Shikimate dehydrogenase (NADP(+))">
    <location>
        <begin position="1"/>
        <end position="294"/>
    </location>
</feature>
<feature type="active site" description="Proton acceptor" evidence="1">
    <location>
        <position position="74"/>
    </location>
</feature>
<feature type="binding site" evidence="1">
    <location>
        <begin position="23"/>
        <end position="25"/>
    </location>
    <ligand>
        <name>shikimate</name>
        <dbReference type="ChEBI" id="CHEBI:36208"/>
    </ligand>
</feature>
<feature type="binding site" evidence="1">
    <location>
        <position position="70"/>
    </location>
    <ligand>
        <name>shikimate</name>
        <dbReference type="ChEBI" id="CHEBI:36208"/>
    </ligand>
</feature>
<feature type="binding site" evidence="1">
    <location>
        <position position="95"/>
    </location>
    <ligand>
        <name>shikimate</name>
        <dbReference type="ChEBI" id="CHEBI:36208"/>
    </ligand>
</feature>
<feature type="binding site" evidence="1">
    <location>
        <position position="110"/>
    </location>
    <ligand>
        <name>shikimate</name>
        <dbReference type="ChEBI" id="CHEBI:36208"/>
    </ligand>
</feature>
<feature type="binding site" evidence="1">
    <location>
        <begin position="135"/>
        <end position="139"/>
    </location>
    <ligand>
        <name>NADP(+)</name>
        <dbReference type="ChEBI" id="CHEBI:58349"/>
    </ligand>
</feature>
<feature type="binding site" evidence="1">
    <location>
        <begin position="159"/>
        <end position="164"/>
    </location>
    <ligand>
        <name>NADP(+)</name>
        <dbReference type="ChEBI" id="CHEBI:58349"/>
    </ligand>
</feature>
<feature type="binding site" evidence="1">
    <location>
        <position position="232"/>
    </location>
    <ligand>
        <name>NADP(+)</name>
        <dbReference type="ChEBI" id="CHEBI:58349"/>
    </ligand>
</feature>
<feature type="binding site" evidence="1">
    <location>
        <position position="234"/>
    </location>
    <ligand>
        <name>shikimate</name>
        <dbReference type="ChEBI" id="CHEBI:36208"/>
    </ligand>
</feature>
<feature type="binding site" evidence="1">
    <location>
        <position position="255"/>
    </location>
    <ligand>
        <name>NADP(+)</name>
        <dbReference type="ChEBI" id="CHEBI:58349"/>
    </ligand>
</feature>
<proteinExistence type="inferred from homology"/>
<reference key="1">
    <citation type="journal article" date="2010" name="PLoS ONE">
        <title>The complete multipartite genome sequence of Cupriavidus necator JMP134, a versatile pollutant degrader.</title>
        <authorList>
            <person name="Lykidis A."/>
            <person name="Perez-Pantoja D."/>
            <person name="Ledger T."/>
            <person name="Mavromatis K."/>
            <person name="Anderson I.J."/>
            <person name="Ivanova N.N."/>
            <person name="Hooper S.D."/>
            <person name="Lapidus A."/>
            <person name="Lucas S."/>
            <person name="Gonzalez B."/>
            <person name="Kyrpides N.C."/>
        </authorList>
    </citation>
    <scope>NUCLEOTIDE SEQUENCE [LARGE SCALE GENOMIC DNA]</scope>
    <source>
        <strain>JMP134 / LMG 1197</strain>
    </source>
</reference>
<name>AROE_CUPPJ</name>
<protein>
    <recommendedName>
        <fullName evidence="1">Shikimate dehydrogenase (NADP(+))</fullName>
        <shortName evidence="1">SDH</shortName>
        <ecNumber evidence="1">1.1.1.25</ecNumber>
    </recommendedName>
</protein>
<dbReference type="EC" id="1.1.1.25" evidence="1"/>
<dbReference type="EMBL" id="CP000090">
    <property type="protein sequence ID" value="AAZ62216.1"/>
    <property type="molecule type" value="Genomic_DNA"/>
</dbReference>
<dbReference type="SMR" id="Q46XB7"/>
<dbReference type="STRING" id="264198.Reut_A2855"/>
<dbReference type="KEGG" id="reu:Reut_A2855"/>
<dbReference type="eggNOG" id="COG0169">
    <property type="taxonomic scope" value="Bacteria"/>
</dbReference>
<dbReference type="HOGENOM" id="CLU_044063_2_1_4"/>
<dbReference type="OrthoDB" id="9776868at2"/>
<dbReference type="UniPathway" id="UPA00053">
    <property type="reaction ID" value="UER00087"/>
</dbReference>
<dbReference type="GO" id="GO:0005829">
    <property type="term" value="C:cytosol"/>
    <property type="evidence" value="ECO:0007669"/>
    <property type="project" value="TreeGrafter"/>
</dbReference>
<dbReference type="GO" id="GO:0050661">
    <property type="term" value="F:NADP binding"/>
    <property type="evidence" value="ECO:0007669"/>
    <property type="project" value="InterPro"/>
</dbReference>
<dbReference type="GO" id="GO:0004764">
    <property type="term" value="F:shikimate 3-dehydrogenase (NADP+) activity"/>
    <property type="evidence" value="ECO:0007669"/>
    <property type="project" value="UniProtKB-UniRule"/>
</dbReference>
<dbReference type="GO" id="GO:0008652">
    <property type="term" value="P:amino acid biosynthetic process"/>
    <property type="evidence" value="ECO:0007669"/>
    <property type="project" value="UniProtKB-KW"/>
</dbReference>
<dbReference type="GO" id="GO:0009073">
    <property type="term" value="P:aromatic amino acid family biosynthetic process"/>
    <property type="evidence" value="ECO:0007669"/>
    <property type="project" value="UniProtKB-KW"/>
</dbReference>
<dbReference type="GO" id="GO:0009423">
    <property type="term" value="P:chorismate biosynthetic process"/>
    <property type="evidence" value="ECO:0007669"/>
    <property type="project" value="UniProtKB-UniRule"/>
</dbReference>
<dbReference type="GO" id="GO:0019632">
    <property type="term" value="P:shikimate metabolic process"/>
    <property type="evidence" value="ECO:0007669"/>
    <property type="project" value="InterPro"/>
</dbReference>
<dbReference type="CDD" id="cd01065">
    <property type="entry name" value="NAD_bind_Shikimate_DH"/>
    <property type="match status" value="1"/>
</dbReference>
<dbReference type="FunFam" id="3.40.50.10860:FF:000006">
    <property type="entry name" value="Shikimate dehydrogenase (NADP(+))"/>
    <property type="match status" value="1"/>
</dbReference>
<dbReference type="Gene3D" id="3.40.50.10860">
    <property type="entry name" value="Leucine Dehydrogenase, chain A, domain 1"/>
    <property type="match status" value="1"/>
</dbReference>
<dbReference type="Gene3D" id="3.40.50.720">
    <property type="entry name" value="NAD(P)-binding Rossmann-like Domain"/>
    <property type="match status" value="1"/>
</dbReference>
<dbReference type="HAMAP" id="MF_00222">
    <property type="entry name" value="Shikimate_DH_AroE"/>
    <property type="match status" value="1"/>
</dbReference>
<dbReference type="InterPro" id="IPR046346">
    <property type="entry name" value="Aminoacid_DH-like_N_sf"/>
</dbReference>
<dbReference type="InterPro" id="IPR036291">
    <property type="entry name" value="NAD(P)-bd_dom_sf"/>
</dbReference>
<dbReference type="InterPro" id="IPR041121">
    <property type="entry name" value="SDH_C"/>
</dbReference>
<dbReference type="InterPro" id="IPR011342">
    <property type="entry name" value="Shikimate_DH"/>
</dbReference>
<dbReference type="InterPro" id="IPR013708">
    <property type="entry name" value="Shikimate_DH-bd_N"/>
</dbReference>
<dbReference type="InterPro" id="IPR022893">
    <property type="entry name" value="Shikimate_DH_fam"/>
</dbReference>
<dbReference type="InterPro" id="IPR006151">
    <property type="entry name" value="Shikm_DH/Glu-tRNA_Rdtase"/>
</dbReference>
<dbReference type="NCBIfam" id="TIGR00507">
    <property type="entry name" value="aroE"/>
    <property type="match status" value="1"/>
</dbReference>
<dbReference type="NCBIfam" id="NF001310">
    <property type="entry name" value="PRK00258.1-2"/>
    <property type="match status" value="1"/>
</dbReference>
<dbReference type="PANTHER" id="PTHR21089:SF1">
    <property type="entry name" value="BIFUNCTIONAL 3-DEHYDROQUINATE DEHYDRATASE_SHIKIMATE DEHYDROGENASE, CHLOROPLASTIC"/>
    <property type="match status" value="1"/>
</dbReference>
<dbReference type="PANTHER" id="PTHR21089">
    <property type="entry name" value="SHIKIMATE DEHYDROGENASE"/>
    <property type="match status" value="1"/>
</dbReference>
<dbReference type="Pfam" id="PF18317">
    <property type="entry name" value="SDH_C"/>
    <property type="match status" value="1"/>
</dbReference>
<dbReference type="Pfam" id="PF01488">
    <property type="entry name" value="Shikimate_DH"/>
    <property type="match status" value="1"/>
</dbReference>
<dbReference type="Pfam" id="PF08501">
    <property type="entry name" value="Shikimate_dh_N"/>
    <property type="match status" value="1"/>
</dbReference>
<dbReference type="SUPFAM" id="SSF53223">
    <property type="entry name" value="Aminoacid dehydrogenase-like, N-terminal domain"/>
    <property type="match status" value="1"/>
</dbReference>
<dbReference type="SUPFAM" id="SSF51735">
    <property type="entry name" value="NAD(P)-binding Rossmann-fold domains"/>
    <property type="match status" value="1"/>
</dbReference>
<comment type="function">
    <text evidence="1">Involved in the biosynthesis of the chorismate, which leads to the biosynthesis of aromatic amino acids. Catalyzes the reversible NADPH linked reduction of 3-dehydroshikimate (DHSA) to yield shikimate (SA).</text>
</comment>
<comment type="catalytic activity">
    <reaction evidence="1">
        <text>shikimate + NADP(+) = 3-dehydroshikimate + NADPH + H(+)</text>
        <dbReference type="Rhea" id="RHEA:17737"/>
        <dbReference type="ChEBI" id="CHEBI:15378"/>
        <dbReference type="ChEBI" id="CHEBI:16630"/>
        <dbReference type="ChEBI" id="CHEBI:36208"/>
        <dbReference type="ChEBI" id="CHEBI:57783"/>
        <dbReference type="ChEBI" id="CHEBI:58349"/>
        <dbReference type="EC" id="1.1.1.25"/>
    </reaction>
</comment>
<comment type="pathway">
    <text evidence="1">Metabolic intermediate biosynthesis; chorismate biosynthesis; chorismate from D-erythrose 4-phosphate and phosphoenolpyruvate: step 4/7.</text>
</comment>
<comment type="subunit">
    <text evidence="1">Homodimer.</text>
</comment>
<comment type="similarity">
    <text evidence="1">Belongs to the shikimate dehydrogenase family.</text>
</comment>